<sequence>MKNWKTLLLGIAMIANTSFAAPQVVDKVAAVVNNGVVLESDVDGLMQSVKLNAGQAGQQLPDDATLRHQILERLIMDQIILQMGQKMGVKITDEQLDQAIANIAKQNNMTMDQMRSRLAYDGLNYSTYRNQIRKEMIISEVRNNEVRRRITVLPQEVDALAKQIGTQNDASTELNLSHILIALPENPTSEQVNDAQRQAESIVEEARNGADFGKLAITYSADQQALKGGQMGWGRIQELPGIFAQALSTAKKGDIVGPIRSGVGFHILKVNDLRGQSQSISVTEVHARHILLKPSPIMNDQQARLKLEEIAADIKSGKTTFAAAAKEYSQDPGSANQGGDLGWATPDIFDPAFRDALTKLHKGQISAPVHSSFGWHLIELLDTRKVDKTDAAQKDRAYRMLMNRKFSEEAATWMQEQRASAYVKILSN</sequence>
<feature type="signal peptide" evidence="1">
    <location>
        <begin position="1"/>
        <end position="20"/>
    </location>
</feature>
<feature type="chain" id="PRO_0000270035" description="Chaperone SurA">
    <location>
        <begin position="21"/>
        <end position="428"/>
    </location>
</feature>
<feature type="domain" description="PpiC 1" evidence="1">
    <location>
        <begin position="171"/>
        <end position="272"/>
    </location>
</feature>
<feature type="domain" description="PpiC 2" evidence="1">
    <location>
        <begin position="282"/>
        <end position="382"/>
    </location>
</feature>
<protein>
    <recommendedName>
        <fullName evidence="1">Chaperone SurA</fullName>
    </recommendedName>
    <alternativeName>
        <fullName evidence="1">Peptidyl-prolyl cis-trans isomerase SurA</fullName>
        <shortName evidence="1">PPIase SurA</shortName>
        <ecNumber evidence="1">5.2.1.8</ecNumber>
    </alternativeName>
    <alternativeName>
        <fullName evidence="1">Rotamase SurA</fullName>
    </alternativeName>
</protein>
<dbReference type="EC" id="5.2.1.8" evidence="1"/>
<dbReference type="EMBL" id="CP000026">
    <property type="protein sequence ID" value="AAV76126.1"/>
    <property type="molecule type" value="Genomic_DNA"/>
</dbReference>
<dbReference type="RefSeq" id="WP_000800482.1">
    <property type="nucleotide sequence ID" value="NC_006511.1"/>
</dbReference>
<dbReference type="SMR" id="Q5PDE6"/>
<dbReference type="KEGG" id="spt:SPA0093"/>
<dbReference type="HOGENOM" id="CLU_034646_11_0_6"/>
<dbReference type="Proteomes" id="UP000008185">
    <property type="component" value="Chromosome"/>
</dbReference>
<dbReference type="GO" id="GO:0030288">
    <property type="term" value="C:outer membrane-bounded periplasmic space"/>
    <property type="evidence" value="ECO:0007669"/>
    <property type="project" value="InterPro"/>
</dbReference>
<dbReference type="GO" id="GO:0042277">
    <property type="term" value="F:peptide binding"/>
    <property type="evidence" value="ECO:0007669"/>
    <property type="project" value="InterPro"/>
</dbReference>
<dbReference type="GO" id="GO:0003755">
    <property type="term" value="F:peptidyl-prolyl cis-trans isomerase activity"/>
    <property type="evidence" value="ECO:0007669"/>
    <property type="project" value="UniProtKB-UniRule"/>
</dbReference>
<dbReference type="GO" id="GO:0051082">
    <property type="term" value="F:unfolded protein binding"/>
    <property type="evidence" value="ECO:0007669"/>
    <property type="project" value="UniProtKB-UniRule"/>
</dbReference>
<dbReference type="GO" id="GO:0043165">
    <property type="term" value="P:Gram-negative-bacterium-type cell outer membrane assembly"/>
    <property type="evidence" value="ECO:0007669"/>
    <property type="project" value="InterPro"/>
</dbReference>
<dbReference type="GO" id="GO:0006457">
    <property type="term" value="P:protein folding"/>
    <property type="evidence" value="ECO:0007669"/>
    <property type="project" value="UniProtKB-UniRule"/>
</dbReference>
<dbReference type="GO" id="GO:0050821">
    <property type="term" value="P:protein stabilization"/>
    <property type="evidence" value="ECO:0007669"/>
    <property type="project" value="InterPro"/>
</dbReference>
<dbReference type="FunFam" id="1.10.4030.10:FF:000002">
    <property type="entry name" value="Chaperone SurA"/>
    <property type="match status" value="1"/>
</dbReference>
<dbReference type="FunFam" id="3.10.50.40:FF:000007">
    <property type="entry name" value="Chaperone SurA"/>
    <property type="match status" value="1"/>
</dbReference>
<dbReference type="Gene3D" id="3.10.50.40">
    <property type="match status" value="2"/>
</dbReference>
<dbReference type="Gene3D" id="1.10.4030.10">
    <property type="entry name" value="Porin chaperone SurA, peptide-binding domain"/>
    <property type="match status" value="2"/>
</dbReference>
<dbReference type="HAMAP" id="MF_01183">
    <property type="entry name" value="Chaperone_SurA"/>
    <property type="match status" value="1"/>
</dbReference>
<dbReference type="InterPro" id="IPR050280">
    <property type="entry name" value="OMP_Chaperone_SurA"/>
</dbReference>
<dbReference type="InterPro" id="IPR046357">
    <property type="entry name" value="PPIase_dom_sf"/>
</dbReference>
<dbReference type="InterPro" id="IPR000297">
    <property type="entry name" value="PPIase_PpiC"/>
</dbReference>
<dbReference type="InterPro" id="IPR023058">
    <property type="entry name" value="PPIase_PpiC_CS"/>
</dbReference>
<dbReference type="InterPro" id="IPR023034">
    <property type="entry name" value="PPIase_SurA"/>
</dbReference>
<dbReference type="InterPro" id="IPR015391">
    <property type="entry name" value="SurA_N"/>
</dbReference>
<dbReference type="InterPro" id="IPR027304">
    <property type="entry name" value="Trigger_fact/SurA_dom_sf"/>
</dbReference>
<dbReference type="NCBIfam" id="NF008038">
    <property type="entry name" value="PRK10770.1"/>
    <property type="match status" value="1"/>
</dbReference>
<dbReference type="PANTHER" id="PTHR47637">
    <property type="entry name" value="CHAPERONE SURA"/>
    <property type="match status" value="1"/>
</dbReference>
<dbReference type="PANTHER" id="PTHR47637:SF1">
    <property type="entry name" value="CHAPERONE SURA"/>
    <property type="match status" value="1"/>
</dbReference>
<dbReference type="Pfam" id="PF00639">
    <property type="entry name" value="Rotamase"/>
    <property type="match status" value="1"/>
</dbReference>
<dbReference type="Pfam" id="PF13616">
    <property type="entry name" value="Rotamase_3"/>
    <property type="match status" value="1"/>
</dbReference>
<dbReference type="Pfam" id="PF09312">
    <property type="entry name" value="SurA_N"/>
    <property type="match status" value="1"/>
</dbReference>
<dbReference type="SUPFAM" id="SSF54534">
    <property type="entry name" value="FKBP-like"/>
    <property type="match status" value="2"/>
</dbReference>
<dbReference type="SUPFAM" id="SSF109998">
    <property type="entry name" value="Triger factor/SurA peptide-binding domain-like"/>
    <property type="match status" value="1"/>
</dbReference>
<dbReference type="PROSITE" id="PS01096">
    <property type="entry name" value="PPIC_PPIASE_1"/>
    <property type="match status" value="2"/>
</dbReference>
<dbReference type="PROSITE" id="PS50198">
    <property type="entry name" value="PPIC_PPIASE_2"/>
    <property type="match status" value="2"/>
</dbReference>
<comment type="function">
    <text evidence="1">Chaperone involved in the correct folding and assembly of outer membrane proteins. Recognizes specific patterns of aromatic residues and the orientation of their side chains, which are found more frequently in integral outer membrane proteins. May act in both early periplasmic and late outer membrane-associated steps of protein maturation.</text>
</comment>
<comment type="catalytic activity">
    <reaction evidence="1">
        <text>[protein]-peptidylproline (omega=180) = [protein]-peptidylproline (omega=0)</text>
        <dbReference type="Rhea" id="RHEA:16237"/>
        <dbReference type="Rhea" id="RHEA-COMP:10747"/>
        <dbReference type="Rhea" id="RHEA-COMP:10748"/>
        <dbReference type="ChEBI" id="CHEBI:83833"/>
        <dbReference type="ChEBI" id="CHEBI:83834"/>
        <dbReference type="EC" id="5.2.1.8"/>
    </reaction>
</comment>
<comment type="subcellular location">
    <subcellularLocation>
        <location evidence="1">Periplasm</location>
    </subcellularLocation>
    <text evidence="1">Is capable of associating with the outer membrane.</text>
</comment>
<comment type="domain">
    <text evidence="1">The PPIase activity resides only in the second parvulin domain. The N-terminal region and the C-terminal tail are necessary and sufficient for the chaperone activity of SurA. The PPIase activity is dispensable for SurA to function as a chaperone. The N-terminal region and the C-terminal tail are also required for porin recognition.</text>
</comment>
<gene>
    <name evidence="1" type="primary">surA</name>
    <name type="ordered locus">SPA0093</name>
</gene>
<evidence type="ECO:0000255" key="1">
    <source>
        <dbReference type="HAMAP-Rule" id="MF_01183"/>
    </source>
</evidence>
<reference key="1">
    <citation type="journal article" date="2004" name="Nat. Genet.">
        <title>Comparison of genome degradation in Paratyphi A and Typhi, human-restricted serovars of Salmonella enterica that cause typhoid.</title>
        <authorList>
            <person name="McClelland M."/>
            <person name="Sanderson K.E."/>
            <person name="Clifton S.W."/>
            <person name="Latreille P."/>
            <person name="Porwollik S."/>
            <person name="Sabo A."/>
            <person name="Meyer R."/>
            <person name="Bieri T."/>
            <person name="Ozersky P."/>
            <person name="McLellan M."/>
            <person name="Harkins C.R."/>
            <person name="Wang C."/>
            <person name="Nguyen C."/>
            <person name="Berghoff A."/>
            <person name="Elliott G."/>
            <person name="Kohlberg S."/>
            <person name="Strong C."/>
            <person name="Du F."/>
            <person name="Carter J."/>
            <person name="Kremizki C."/>
            <person name="Layman D."/>
            <person name="Leonard S."/>
            <person name="Sun H."/>
            <person name="Fulton L."/>
            <person name="Nash W."/>
            <person name="Miner T."/>
            <person name="Minx P."/>
            <person name="Delehaunty K."/>
            <person name="Fronick C."/>
            <person name="Magrini V."/>
            <person name="Nhan M."/>
            <person name="Warren W."/>
            <person name="Florea L."/>
            <person name="Spieth J."/>
            <person name="Wilson R.K."/>
        </authorList>
    </citation>
    <scope>NUCLEOTIDE SEQUENCE [LARGE SCALE GENOMIC DNA]</scope>
    <source>
        <strain>ATCC 9150 / SARB42</strain>
    </source>
</reference>
<proteinExistence type="inferred from homology"/>
<accession>Q5PDE6</accession>
<organism>
    <name type="scientific">Salmonella paratyphi A (strain ATCC 9150 / SARB42)</name>
    <dbReference type="NCBI Taxonomy" id="295319"/>
    <lineage>
        <taxon>Bacteria</taxon>
        <taxon>Pseudomonadati</taxon>
        <taxon>Pseudomonadota</taxon>
        <taxon>Gammaproteobacteria</taxon>
        <taxon>Enterobacterales</taxon>
        <taxon>Enterobacteriaceae</taxon>
        <taxon>Salmonella</taxon>
    </lineage>
</organism>
<keyword id="KW-0143">Chaperone</keyword>
<keyword id="KW-0413">Isomerase</keyword>
<keyword id="KW-0574">Periplasm</keyword>
<keyword id="KW-0677">Repeat</keyword>
<keyword id="KW-0697">Rotamase</keyword>
<keyword id="KW-0732">Signal</keyword>
<name>SURA_SALPA</name>